<protein>
    <recommendedName>
        <fullName>ATP phosphoribosyltransferase</fullName>
        <shortName>ATP-PRT</shortName>
        <shortName>ATP-PRTase</shortName>
        <ecNumber>2.4.2.17</ecNumber>
    </recommendedName>
</protein>
<reference key="1">
    <citation type="journal article" date="1998" name="Nature">
        <title>The complete genome of the hyperthermophilic bacterium Aquifex aeolicus.</title>
        <authorList>
            <person name="Deckert G."/>
            <person name="Warren P.V."/>
            <person name="Gaasterland T."/>
            <person name="Young W.G."/>
            <person name="Lenox A.L."/>
            <person name="Graham D.E."/>
            <person name="Overbeek R."/>
            <person name="Snead M.A."/>
            <person name="Keller M."/>
            <person name="Aujay M."/>
            <person name="Huber R."/>
            <person name="Feldman R.A."/>
            <person name="Short J.M."/>
            <person name="Olsen G.J."/>
            <person name="Swanson R.V."/>
        </authorList>
    </citation>
    <scope>NUCLEOTIDE SEQUENCE [LARGE SCALE GENOMIC DNA]</scope>
    <source>
        <strain>VF5</strain>
    </source>
</reference>
<accession>O67543</accession>
<dbReference type="EC" id="2.4.2.17"/>
<dbReference type="EMBL" id="AE000657">
    <property type="protein sequence ID" value="AAC07493.1"/>
    <property type="molecule type" value="Genomic_DNA"/>
</dbReference>
<dbReference type="PIR" id="E70439">
    <property type="entry name" value="E70439"/>
</dbReference>
<dbReference type="RefSeq" id="NP_214108.1">
    <property type="nucleotide sequence ID" value="NC_000918.1"/>
</dbReference>
<dbReference type="RefSeq" id="WP_010881046.1">
    <property type="nucleotide sequence ID" value="NC_000918.1"/>
</dbReference>
<dbReference type="SMR" id="O67543"/>
<dbReference type="FunCoup" id="O67543">
    <property type="interactions" value="387"/>
</dbReference>
<dbReference type="STRING" id="224324.aq_1613"/>
<dbReference type="EnsemblBacteria" id="AAC07493">
    <property type="protein sequence ID" value="AAC07493"/>
    <property type="gene ID" value="aq_1613"/>
</dbReference>
<dbReference type="KEGG" id="aae:aq_1613"/>
<dbReference type="PATRIC" id="fig|224324.8.peg.1246"/>
<dbReference type="eggNOG" id="COG0040">
    <property type="taxonomic scope" value="Bacteria"/>
</dbReference>
<dbReference type="HOGENOM" id="CLU_038115_2_0_0"/>
<dbReference type="InParanoid" id="O67543"/>
<dbReference type="OrthoDB" id="9801867at2"/>
<dbReference type="UniPathway" id="UPA00031">
    <property type="reaction ID" value="UER00006"/>
</dbReference>
<dbReference type="Proteomes" id="UP000000798">
    <property type="component" value="Chromosome"/>
</dbReference>
<dbReference type="GO" id="GO:0005737">
    <property type="term" value="C:cytoplasm"/>
    <property type="evidence" value="ECO:0007669"/>
    <property type="project" value="UniProtKB-SubCell"/>
</dbReference>
<dbReference type="GO" id="GO:0005524">
    <property type="term" value="F:ATP binding"/>
    <property type="evidence" value="ECO:0007669"/>
    <property type="project" value="UniProtKB-KW"/>
</dbReference>
<dbReference type="GO" id="GO:0003879">
    <property type="term" value="F:ATP phosphoribosyltransferase activity"/>
    <property type="evidence" value="ECO:0000318"/>
    <property type="project" value="GO_Central"/>
</dbReference>
<dbReference type="GO" id="GO:0000105">
    <property type="term" value="P:L-histidine biosynthetic process"/>
    <property type="evidence" value="ECO:0000318"/>
    <property type="project" value="GO_Central"/>
</dbReference>
<dbReference type="CDD" id="cd13595">
    <property type="entry name" value="PBP2_HisGs"/>
    <property type="match status" value="1"/>
</dbReference>
<dbReference type="FunFam" id="3.40.190.10:FF:000008">
    <property type="entry name" value="ATP phosphoribosyltransferase"/>
    <property type="match status" value="1"/>
</dbReference>
<dbReference type="Gene3D" id="3.40.190.10">
    <property type="entry name" value="Periplasmic binding protein-like II"/>
    <property type="match status" value="2"/>
</dbReference>
<dbReference type="HAMAP" id="MF_01018">
    <property type="entry name" value="HisG_Short"/>
    <property type="match status" value="1"/>
</dbReference>
<dbReference type="InterPro" id="IPR013820">
    <property type="entry name" value="ATP_PRibTrfase_cat"/>
</dbReference>
<dbReference type="InterPro" id="IPR018198">
    <property type="entry name" value="ATP_PRibTrfase_CS"/>
</dbReference>
<dbReference type="InterPro" id="IPR001348">
    <property type="entry name" value="ATP_PRibTrfase_HisG"/>
</dbReference>
<dbReference type="InterPro" id="IPR024893">
    <property type="entry name" value="ATP_PRibTrfase_HisG_short"/>
</dbReference>
<dbReference type="NCBIfam" id="TIGR00070">
    <property type="entry name" value="hisG"/>
    <property type="match status" value="1"/>
</dbReference>
<dbReference type="PANTHER" id="PTHR21403:SF8">
    <property type="entry name" value="ATP PHOSPHORIBOSYLTRANSFERASE"/>
    <property type="match status" value="1"/>
</dbReference>
<dbReference type="PANTHER" id="PTHR21403">
    <property type="entry name" value="ATP PHOSPHORIBOSYLTRANSFERASE ATP-PRTASE"/>
    <property type="match status" value="1"/>
</dbReference>
<dbReference type="Pfam" id="PF01634">
    <property type="entry name" value="HisG"/>
    <property type="match status" value="1"/>
</dbReference>
<dbReference type="SUPFAM" id="SSF53850">
    <property type="entry name" value="Periplasmic binding protein-like II"/>
    <property type="match status" value="1"/>
</dbReference>
<dbReference type="PROSITE" id="PS01316">
    <property type="entry name" value="ATP_P_PHORIBOSYLTR"/>
    <property type="match status" value="1"/>
</dbReference>
<evidence type="ECO:0000250" key="1"/>
<evidence type="ECO:0000305" key="2"/>
<feature type="chain" id="PRO_0000151893" description="ATP phosphoribosyltransferase">
    <location>
        <begin position="1"/>
        <end position="214"/>
    </location>
</feature>
<gene>
    <name type="primary">hisG</name>
    <name type="ordered locus">aq_1613</name>
</gene>
<sequence>MIKVALPKGRLFEETVDLLLKRGIIEKRIEEGRKLILEEGGITFFLVKPSDVPVYVESGVSDLGVCGYDVYLEKKPSVYRLMDLGIGFCRIAVAGKPESEEKYFSSTHISVATKYPNIAYEFFKKKGVKADIYYLNGSVELAPLVGLSDFILDLVQTGRTLKENGLIVIEEVGKSTAWLIANKDSFRIKNGQIMEFLSRLVQHNKDGLQVQGSS</sequence>
<organism>
    <name type="scientific">Aquifex aeolicus (strain VF5)</name>
    <dbReference type="NCBI Taxonomy" id="224324"/>
    <lineage>
        <taxon>Bacteria</taxon>
        <taxon>Pseudomonadati</taxon>
        <taxon>Aquificota</taxon>
        <taxon>Aquificia</taxon>
        <taxon>Aquificales</taxon>
        <taxon>Aquificaceae</taxon>
        <taxon>Aquifex</taxon>
    </lineage>
</organism>
<keyword id="KW-0028">Amino-acid biosynthesis</keyword>
<keyword id="KW-0067">ATP-binding</keyword>
<keyword id="KW-0963">Cytoplasm</keyword>
<keyword id="KW-0328">Glycosyltransferase</keyword>
<keyword id="KW-0368">Histidine biosynthesis</keyword>
<keyword id="KW-0547">Nucleotide-binding</keyword>
<keyword id="KW-1185">Reference proteome</keyword>
<keyword id="KW-0808">Transferase</keyword>
<name>HIS1_AQUAE</name>
<proteinExistence type="inferred from homology"/>
<comment type="function">
    <text evidence="1">Catalyzes the condensation of ATP and 5-phosphoribose 1-diphosphate to form N'-(5'-phosphoribosyl)-ATP (PR-ATP). Has a crucial role in the pathway because the rate of histidine biosynthesis seems to be controlled primarily by regulation of HisG enzymatic activity (By similarity).</text>
</comment>
<comment type="catalytic activity">
    <reaction>
        <text>1-(5-phospho-beta-D-ribosyl)-ATP + diphosphate = 5-phospho-alpha-D-ribose 1-diphosphate + ATP</text>
        <dbReference type="Rhea" id="RHEA:18473"/>
        <dbReference type="ChEBI" id="CHEBI:30616"/>
        <dbReference type="ChEBI" id="CHEBI:33019"/>
        <dbReference type="ChEBI" id="CHEBI:58017"/>
        <dbReference type="ChEBI" id="CHEBI:73183"/>
        <dbReference type="EC" id="2.4.2.17"/>
    </reaction>
</comment>
<comment type="pathway">
    <text>Amino-acid biosynthesis; L-histidine biosynthesis; L-histidine from 5-phospho-alpha-D-ribose 1-diphosphate: step 1/9.</text>
</comment>
<comment type="subunit">
    <text evidence="1">Heteromultimer composed of HisG and HisZ subunits.</text>
</comment>
<comment type="subcellular location">
    <subcellularLocation>
        <location evidence="1">Cytoplasm</location>
    </subcellularLocation>
</comment>
<comment type="domain">
    <text>Lacks the C-terminal regulatory region which is replaced by HisZ.</text>
</comment>
<comment type="similarity">
    <text evidence="2">Belongs to the ATP phosphoribosyltransferase family. Short subfamily.</text>
</comment>